<organism>
    <name type="scientific">Archaeoglobus fulgidus (strain ATCC 49558 / DSM 4304 / JCM 9628 / NBRC 100126 / VC-16)</name>
    <dbReference type="NCBI Taxonomy" id="224325"/>
    <lineage>
        <taxon>Archaea</taxon>
        <taxon>Methanobacteriati</taxon>
        <taxon>Methanobacteriota</taxon>
        <taxon>Archaeoglobi</taxon>
        <taxon>Archaeoglobales</taxon>
        <taxon>Archaeoglobaceae</taxon>
        <taxon>Archaeoglobus</taxon>
    </lineage>
</organism>
<proteinExistence type="inferred from homology"/>
<sequence>MGIKTQKNFICLKRTFSMNLRDAISVANPVQLEEEIKHDEVVSFLKSKNLLDKPVILNVEGKKVAKNFVSSRETLGKYLGVDAYSIARELSKIEDREAEIRVEPFSSLAMKKVDVNLQELPVIKYFPRDGGRYITAGIVIAQRNGVYNASIHRMLLLDESRVAARLVPPRHTYLMWREAVEREEELEVAVVIGTHPLFLFASATRVPSGKEFSYAAGLMGRLTLYRKGEMLVPDSEIILFGRITAETAKEGPFVDITGTYDIVRDEPVIVFDEMYVKEDYIYYSITPAGKEHQMLMGVPYEPVIYRFVSNVCKVKNVITTPGSCHYFHCVVQIEKKSEGDGKNAIIAALAANPSMKGVVVVDDDIDILSYEDMEFAIATRFQPDRDLVVVKGARGSSLDPSADKTTSKWGIDATKPLGKEGFDRVV</sequence>
<accession>O28630</accession>
<feature type="chain" id="PRO_0000157382" description="Anhydromevalonate phosphate decarboxylase">
    <location>
        <begin position="1"/>
        <end position="426"/>
    </location>
</feature>
<feature type="active site" description="Proton acceptor" evidence="1">
    <location>
        <position position="255"/>
    </location>
</feature>
<feature type="binding site" evidence="1">
    <location>
        <position position="148"/>
    </location>
    <ligand>
        <name>Mn(2+)</name>
        <dbReference type="ChEBI" id="CHEBI:29035"/>
    </ligand>
</feature>
<feature type="binding site" evidence="1">
    <location>
        <position position="211"/>
    </location>
    <ligand>
        <name>Mn(2+)</name>
        <dbReference type="ChEBI" id="CHEBI:29035"/>
    </ligand>
</feature>
<keyword id="KW-0210">Decarboxylase</keyword>
<keyword id="KW-0285">Flavoprotein</keyword>
<keyword id="KW-0288">FMN</keyword>
<keyword id="KW-0414">Isoprene biosynthesis</keyword>
<keyword id="KW-0456">Lyase</keyword>
<keyword id="KW-0464">Manganese</keyword>
<keyword id="KW-0479">Metal-binding</keyword>
<keyword id="KW-1185">Reference proteome</keyword>
<gene>
    <name type="ordered locus">AF_1643</name>
</gene>
<protein>
    <recommendedName>
        <fullName evidence="2">Anhydromevalonate phosphate decarboxylase</fullName>
        <shortName evidence="2">AMPD</shortName>
        <ecNumber evidence="2">4.1.1.126</ecNumber>
    </recommendedName>
</protein>
<reference key="1">
    <citation type="journal article" date="1997" name="Nature">
        <title>The complete genome sequence of the hyperthermophilic, sulphate-reducing archaeon Archaeoglobus fulgidus.</title>
        <authorList>
            <person name="Klenk H.-P."/>
            <person name="Clayton R.A."/>
            <person name="Tomb J.-F."/>
            <person name="White O."/>
            <person name="Nelson K.E."/>
            <person name="Ketchum K.A."/>
            <person name="Dodson R.J."/>
            <person name="Gwinn M.L."/>
            <person name="Hickey E.K."/>
            <person name="Peterson J.D."/>
            <person name="Richardson D.L."/>
            <person name="Kerlavage A.R."/>
            <person name="Graham D.E."/>
            <person name="Kyrpides N.C."/>
            <person name="Fleischmann R.D."/>
            <person name="Quackenbush J."/>
            <person name="Lee N.H."/>
            <person name="Sutton G.G."/>
            <person name="Gill S.R."/>
            <person name="Kirkness E.F."/>
            <person name="Dougherty B.A."/>
            <person name="McKenney K."/>
            <person name="Adams M.D."/>
            <person name="Loftus B.J."/>
            <person name="Peterson S.N."/>
            <person name="Reich C.I."/>
            <person name="McNeil L.K."/>
            <person name="Badger J.H."/>
            <person name="Glodek A."/>
            <person name="Zhou L."/>
            <person name="Overbeek R."/>
            <person name="Gocayne J.D."/>
            <person name="Weidman J.F."/>
            <person name="McDonald L.A."/>
            <person name="Utterback T.R."/>
            <person name="Cotton M.D."/>
            <person name="Spriggs T."/>
            <person name="Artiach P."/>
            <person name="Kaine B.P."/>
            <person name="Sykes S.M."/>
            <person name="Sadow P.W."/>
            <person name="D'Andrea K.P."/>
            <person name="Bowman C."/>
            <person name="Fujii C."/>
            <person name="Garland S.A."/>
            <person name="Mason T.M."/>
            <person name="Olsen G.J."/>
            <person name="Fraser C.M."/>
            <person name="Smith H.O."/>
            <person name="Woese C.R."/>
            <person name="Venter J.C."/>
        </authorList>
    </citation>
    <scope>NUCLEOTIDE SEQUENCE [LARGE SCALE GENOMIC DNA]</scope>
    <source>
        <strain>ATCC 49558 / DSM 4304 / JCM 9628 / NBRC 100126 / VC-16</strain>
    </source>
</reference>
<evidence type="ECO:0000250" key="1">
    <source>
        <dbReference type="UniProtKB" id="P0AAB4"/>
    </source>
</evidence>
<evidence type="ECO:0000250" key="2">
    <source>
        <dbReference type="UniProtKB" id="Q9YA60"/>
    </source>
</evidence>
<evidence type="ECO:0000305" key="3"/>
<dbReference type="EC" id="4.1.1.126" evidence="2"/>
<dbReference type="EMBL" id="AE000782">
    <property type="protein sequence ID" value="AAB89599.1"/>
    <property type="molecule type" value="Genomic_DNA"/>
</dbReference>
<dbReference type="PIR" id="B69455">
    <property type="entry name" value="B69455"/>
</dbReference>
<dbReference type="SMR" id="O28630"/>
<dbReference type="STRING" id="224325.AF_1643"/>
<dbReference type="PaxDb" id="224325-AF_1643"/>
<dbReference type="EnsemblBacteria" id="AAB89599">
    <property type="protein sequence ID" value="AAB89599"/>
    <property type="gene ID" value="AF_1643"/>
</dbReference>
<dbReference type="KEGG" id="afu:AF_1643"/>
<dbReference type="eggNOG" id="arCOG01671">
    <property type="taxonomic scope" value="Archaea"/>
</dbReference>
<dbReference type="HOGENOM" id="CLU_023348_5_1_2"/>
<dbReference type="OrthoDB" id="8480at2157"/>
<dbReference type="PhylomeDB" id="O28630"/>
<dbReference type="UniPathway" id="UPA00057"/>
<dbReference type="Proteomes" id="UP000002199">
    <property type="component" value="Chromosome"/>
</dbReference>
<dbReference type="GO" id="GO:0005737">
    <property type="term" value="C:cytoplasm"/>
    <property type="evidence" value="ECO:0007669"/>
    <property type="project" value="TreeGrafter"/>
</dbReference>
<dbReference type="GO" id="GO:0016831">
    <property type="term" value="F:carboxy-lyase activity"/>
    <property type="evidence" value="ECO:0007669"/>
    <property type="project" value="UniProtKB-KW"/>
</dbReference>
<dbReference type="GO" id="GO:0046872">
    <property type="term" value="F:metal ion binding"/>
    <property type="evidence" value="ECO:0007669"/>
    <property type="project" value="UniProtKB-KW"/>
</dbReference>
<dbReference type="GO" id="GO:0008299">
    <property type="term" value="P:isoprenoid biosynthetic process"/>
    <property type="evidence" value="ECO:0007669"/>
    <property type="project" value="UniProtKB-KW"/>
</dbReference>
<dbReference type="Gene3D" id="3.40.1670.10">
    <property type="entry name" value="UbiD C-terminal domain-like"/>
    <property type="match status" value="1"/>
</dbReference>
<dbReference type="InterPro" id="IPR002830">
    <property type="entry name" value="UbiD"/>
</dbReference>
<dbReference type="InterPro" id="IPR049381">
    <property type="entry name" value="UbiD-like_C"/>
</dbReference>
<dbReference type="InterPro" id="IPR048304">
    <property type="entry name" value="UbiD_Rift_dom"/>
</dbReference>
<dbReference type="NCBIfam" id="TIGR00148">
    <property type="entry name" value="UbiD family decarboxylase"/>
    <property type="match status" value="1"/>
</dbReference>
<dbReference type="PANTHER" id="PTHR30108">
    <property type="entry name" value="3-OCTAPRENYL-4-HYDROXYBENZOATE CARBOXY-LYASE-RELATED"/>
    <property type="match status" value="1"/>
</dbReference>
<dbReference type="PANTHER" id="PTHR30108:SF21">
    <property type="entry name" value="4-HYDROXYBENZOATE DECARBOXYLASE"/>
    <property type="match status" value="1"/>
</dbReference>
<dbReference type="Pfam" id="PF01977">
    <property type="entry name" value="UbiD"/>
    <property type="match status" value="1"/>
</dbReference>
<dbReference type="Pfam" id="PF20696">
    <property type="entry name" value="UbiD_C"/>
    <property type="match status" value="1"/>
</dbReference>
<dbReference type="SUPFAM" id="SSF50475">
    <property type="entry name" value="FMN-binding split barrel"/>
    <property type="match status" value="1"/>
</dbReference>
<dbReference type="SUPFAM" id="SSF143968">
    <property type="entry name" value="UbiD C-terminal domain-like"/>
    <property type="match status" value="1"/>
</dbReference>
<name>AMPD_ARCFU</name>
<comment type="function">
    <text evidence="2">Catalyzes the conversion of trans-anhydromevalonate 5-phosphate (tAHMP) into isopentenyl phosphate (By similarity). Involved in the archaeal mevalonate (MVA) pathway, which provides fundamental precursors for isoprenoid biosynthesis, such as isopentenyl diphosphate (IPP) and dimethylallyl diphosphate (DMAPP) (By similarity).</text>
</comment>
<comment type="catalytic activity">
    <reaction evidence="2">
        <text>(2E)-3-methyl-5-phosphooxypent-2-enoate + H(+) = isopentenyl phosphate + CO2</text>
        <dbReference type="Rhea" id="RHEA:78971"/>
        <dbReference type="ChEBI" id="CHEBI:15378"/>
        <dbReference type="ChEBI" id="CHEBI:16526"/>
        <dbReference type="ChEBI" id="CHEBI:65078"/>
        <dbReference type="ChEBI" id="CHEBI:229665"/>
        <dbReference type="EC" id="4.1.1.126"/>
    </reaction>
    <physiologicalReaction direction="left-to-right" evidence="2">
        <dbReference type="Rhea" id="RHEA:78972"/>
    </physiologicalReaction>
</comment>
<comment type="cofactor">
    <cofactor evidence="1">
        <name>prenylated FMN</name>
        <dbReference type="ChEBI" id="CHEBI:87746"/>
    </cofactor>
</comment>
<comment type="cofactor">
    <cofactor evidence="1">
        <name>Mn(2+)</name>
        <dbReference type="ChEBI" id="CHEBI:29035"/>
    </cofactor>
</comment>
<comment type="pathway">
    <text evidence="2">Isoprenoid biosynthesis; isopentenyl diphosphate biosynthesis via mevalonate pathway.</text>
</comment>
<comment type="similarity">
    <text evidence="3">Belongs to the UbiD family.</text>
</comment>